<protein>
    <recommendedName>
        <fullName evidence="2">CRISPR pre-crRNA endoribonuclease Cas5d</fullName>
        <ecNumber>3.1.-.-</ecNumber>
    </recommendedName>
    <alternativeName>
        <fullName>Pre-crRNA processing endonuclease Cas5d</fullName>
    </alternativeName>
</protein>
<accession>Q65TW5</accession>
<keyword id="KW-0002">3D-structure</keyword>
<keyword id="KW-0051">Antiviral defense</keyword>
<keyword id="KW-0255">Endonuclease</keyword>
<keyword id="KW-0378">Hydrolase</keyword>
<keyword id="KW-0540">Nuclease</keyword>
<keyword id="KW-0694">RNA-binding</keyword>
<name>CAS5D_MANSM</name>
<reference key="1">
    <citation type="journal article" date="2004" name="Nat. Biotechnol.">
        <title>The genome sequence of the capnophilic rumen bacterium Mannheimia succiniciproducens.</title>
        <authorList>
            <person name="Hong S.H."/>
            <person name="Kim J.S."/>
            <person name="Lee S.Y."/>
            <person name="In Y.H."/>
            <person name="Choi S.S."/>
            <person name="Rih J.-K."/>
            <person name="Kim C.H."/>
            <person name="Jeong H."/>
            <person name="Hur C.G."/>
            <person name="Kim J.J."/>
        </authorList>
    </citation>
    <scope>NUCLEOTIDE SEQUENCE [LARGE SCALE GENOMIC DNA]</scope>
    <source>
        <strain>KCTC 0769BP / MBEL55E</strain>
    </source>
</reference>
<reference key="2">
    <citation type="unpublished observations" date="2015-01">
        <authorList>
            <person name="MacMillan A.M."/>
        </authorList>
    </citation>
    <scope>PROBABLE REACTION MECHANISM</scope>
    <scope>COFACTOR</scope>
</reference>
<reference key="3">
    <citation type="journal article" date="2012" name="RNA">
        <title>Cas5d processes pre-crRNA and is a member of a larger family of CRISPR RNA endonucleases.</title>
        <authorList>
            <person name="Garside E.L."/>
            <person name="Schellenberg M.J."/>
            <person name="Gesner E.M."/>
            <person name="Bonanno J.B."/>
            <person name="Sauder J.M."/>
            <person name="Burley S.K."/>
            <person name="Almo S.C."/>
            <person name="Mehta G."/>
            <person name="MacMillan A.M."/>
        </authorList>
    </citation>
    <scope>X-RAY CRYSTALLOGRAPHY (1.95 ANGSTROMS) OF 2-225</scope>
    <scope>FUNCTION</scope>
    <source>
        <strain>KCTC 0769BP / MBEL55E</strain>
    </source>
</reference>
<feature type="chain" id="PRO_0000418432" description="CRISPR pre-crRNA endoribonuclease Cas5d">
    <location>
        <begin position="1"/>
        <end position="225"/>
    </location>
</feature>
<feature type="strand" evidence="5">
    <location>
        <begin position="5"/>
        <end position="14"/>
    </location>
</feature>
<feature type="strand" evidence="5">
    <location>
        <begin position="23"/>
        <end position="27"/>
    </location>
</feature>
<feature type="helix" evidence="5">
    <location>
        <begin position="33"/>
        <end position="43"/>
    </location>
</feature>
<feature type="strand" evidence="5">
    <location>
        <begin position="49"/>
        <end position="58"/>
    </location>
</feature>
<feature type="strand" evidence="5">
    <location>
        <begin position="64"/>
        <end position="68"/>
    </location>
</feature>
<feature type="strand" evidence="5">
    <location>
        <begin position="105"/>
        <end position="122"/>
    </location>
</feature>
<feature type="helix" evidence="5">
    <location>
        <begin position="133"/>
        <end position="144"/>
    </location>
</feature>
<feature type="strand" evidence="5">
    <location>
        <begin position="153"/>
        <end position="156"/>
    </location>
</feature>
<feature type="strand" evidence="5">
    <location>
        <begin position="162"/>
        <end position="165"/>
    </location>
</feature>
<feature type="turn" evidence="5">
    <location>
        <begin position="179"/>
        <end position="181"/>
    </location>
</feature>
<feature type="strand" evidence="5">
    <location>
        <begin position="182"/>
        <end position="193"/>
    </location>
</feature>
<feature type="strand" evidence="5">
    <location>
        <begin position="201"/>
        <end position="209"/>
    </location>
</feature>
<feature type="strand" evidence="5">
    <location>
        <begin position="212"/>
        <end position="214"/>
    </location>
</feature>
<evidence type="ECO:0000269" key="1">
    <source>
    </source>
</evidence>
<evidence type="ECO:0000303" key="2">
    <source>
    </source>
</evidence>
<evidence type="ECO:0000303" key="3">
    <source ref="2"/>
</evidence>
<evidence type="ECO:0000305" key="4"/>
<evidence type="ECO:0007829" key="5">
    <source>
        <dbReference type="PDB" id="3KG4"/>
    </source>
</evidence>
<organism>
    <name type="scientific">Mannheimia succiniciproducens (strain KCTC 0769BP / MBEL55E)</name>
    <dbReference type="NCBI Taxonomy" id="221988"/>
    <lineage>
        <taxon>Bacteria</taxon>
        <taxon>Pseudomonadati</taxon>
        <taxon>Pseudomonadota</taxon>
        <taxon>Gammaproteobacteria</taxon>
        <taxon>Pasteurellales</taxon>
        <taxon>Pasteurellaceae</taxon>
        <taxon>Basfia</taxon>
    </lineage>
</organism>
<sequence length="225" mass="25831">MANRIRLHIWGDYACFTRPEMKVERVSYDVITPSAARGILSAIHWKPAINWVIDKIYVLKPIRFESVRRNELGAKISESKVSGAMKRKSVADLYTVIEDDRQQRAATVLKDVAYVIEAHAVMTSKAGVDENTTKHIEMFKRRALKGQCFQQPCMGVREFPAHFALIDDNDPLPLSQLSESEFNRDLGWMLHDIDFEHGNTPHFFRAELKNGVIDVPPFYAEEVKR</sequence>
<gene>
    <name evidence="2" type="primary">cas5d</name>
    <name type="ordered locus">MS0988</name>
</gene>
<proteinExistence type="evidence at protein level"/>
<comment type="function">
    <text evidence="1 3">CRISPR (clustered regularly interspaced short palindromic repeat) is an adaptive immune system that provides protection against mobile genetic elements (viruses, transposable elements and conjugative plasmids). CRISPR clusters contain spacers, sequences complementary to antecedent mobile elements, and target invading nucleic acids. CRISPR clusters are transcribed and processed into CRISPR RNA (crRNA). This protein is a sequence-specific endonuclease that cleaves pre-crRNA at G21 into mature crRNA. Does not cleave pre-crRNA associated with the T.thermophilus strain HB27 Cas5 protein (AC Q746C2) CRISPR locus (PubMed:23006625). The reaction mechanism may proceed by an intramolecular attack of the 2'-hydroxyl group of G21 on the scissile phosphodiester, cutting the precursor 3' to G21 residue yielding 5'-hydroxyl and 2' and/or 3' ends lacking a hydroxyl group (perhaps a 2'/3' cyclic phosphodiester) (Ref.2).</text>
</comment>
<comment type="cofactor">
    <text evidence="3">Does not require a metal cofactor.</text>
</comment>
<comment type="similarity">
    <text evidence="4">Belongs to the CRISPR-associated protein Cas5 family. Subtype I-C/Dvulg subfamily.</text>
</comment>
<dbReference type="EC" id="3.1.-.-"/>
<dbReference type="EMBL" id="AE016827">
    <property type="protein sequence ID" value="AAU37595.1"/>
    <property type="molecule type" value="Genomic_DNA"/>
</dbReference>
<dbReference type="RefSeq" id="WP_011200165.1">
    <property type="nucleotide sequence ID" value="NC_006300.1"/>
</dbReference>
<dbReference type="PDB" id="3KG4">
    <property type="method" value="X-ray"/>
    <property type="resolution" value="1.95 A"/>
    <property type="chains" value="A=2-225"/>
</dbReference>
<dbReference type="PDBsum" id="3KG4"/>
<dbReference type="SMR" id="Q65TW5"/>
<dbReference type="STRING" id="221988.MS0988"/>
<dbReference type="KEGG" id="msu:MS0988"/>
<dbReference type="eggNOG" id="ENOG502Z82V">
    <property type="taxonomic scope" value="Bacteria"/>
</dbReference>
<dbReference type="HOGENOM" id="CLU_086014_0_0_6"/>
<dbReference type="OrthoDB" id="5621871at2"/>
<dbReference type="EvolutionaryTrace" id="Q65TW5"/>
<dbReference type="Proteomes" id="UP000000607">
    <property type="component" value="Chromosome"/>
</dbReference>
<dbReference type="GO" id="GO:0004519">
    <property type="term" value="F:endonuclease activity"/>
    <property type="evidence" value="ECO:0007669"/>
    <property type="project" value="UniProtKB-KW"/>
</dbReference>
<dbReference type="GO" id="GO:0003723">
    <property type="term" value="F:RNA binding"/>
    <property type="evidence" value="ECO:0007669"/>
    <property type="project" value="UniProtKB-KW"/>
</dbReference>
<dbReference type="GO" id="GO:0051607">
    <property type="term" value="P:defense response to virus"/>
    <property type="evidence" value="ECO:0007669"/>
    <property type="project" value="UniProtKB-KW"/>
</dbReference>
<dbReference type="GO" id="GO:0043571">
    <property type="term" value="P:maintenance of CRISPR repeat elements"/>
    <property type="evidence" value="ECO:0007669"/>
    <property type="project" value="InterPro"/>
</dbReference>
<dbReference type="CDD" id="cd09752">
    <property type="entry name" value="Cas5_I-C"/>
    <property type="match status" value="1"/>
</dbReference>
<dbReference type="Gene3D" id="3.30.70.2660">
    <property type="match status" value="1"/>
</dbReference>
<dbReference type="InterPro" id="IPR021124">
    <property type="entry name" value="CRISPR-assoc_prot_Cas5"/>
</dbReference>
<dbReference type="InterPro" id="IPR013422">
    <property type="entry name" value="CRISPR-assoc_prot_Cas5_N"/>
</dbReference>
<dbReference type="InterPro" id="IPR010155">
    <property type="entry name" value="CRISPR-assoc_prot_Cas5d"/>
</dbReference>
<dbReference type="NCBIfam" id="TIGR01876">
    <property type="entry name" value="cas_Cas5d"/>
    <property type="match status" value="1"/>
</dbReference>
<dbReference type="NCBIfam" id="TIGR02593">
    <property type="entry name" value="CRISPR_cas5"/>
    <property type="match status" value="1"/>
</dbReference>
<dbReference type="Pfam" id="PF09704">
    <property type="entry name" value="Cas_Cas5d"/>
    <property type="match status" value="1"/>
</dbReference>
<dbReference type="PIRSF" id="PIRSF029950">
    <property type="entry name" value="Cas_CT1134"/>
    <property type="match status" value="1"/>
</dbReference>